<name>GPN3_DEBHA</name>
<gene>
    <name type="ordered locus">DEHA2G13222g</name>
</gene>
<proteinExistence type="inferred from homology"/>
<accession>Q6BI59</accession>
<comment type="function">
    <text evidence="1">Small GTPase required for proper nuclear import of RNA polymerase II and III (RNAPII and RNAPIII). May act at an RNAP assembly step prior to nuclear import.</text>
</comment>
<comment type="subunit">
    <text evidence="1">Heterodimers with GPN1 or GPN2. Binds to RNA polymerase II (RNAPII).</text>
</comment>
<comment type="similarity">
    <text evidence="4">Belongs to the GPN-loop GTPase family.</text>
</comment>
<reference key="1">
    <citation type="journal article" date="2004" name="Nature">
        <title>Genome evolution in yeasts.</title>
        <authorList>
            <person name="Dujon B."/>
            <person name="Sherman D."/>
            <person name="Fischer G."/>
            <person name="Durrens P."/>
            <person name="Casaregola S."/>
            <person name="Lafontaine I."/>
            <person name="de Montigny J."/>
            <person name="Marck C."/>
            <person name="Neuveglise C."/>
            <person name="Talla E."/>
            <person name="Goffard N."/>
            <person name="Frangeul L."/>
            <person name="Aigle M."/>
            <person name="Anthouard V."/>
            <person name="Babour A."/>
            <person name="Barbe V."/>
            <person name="Barnay S."/>
            <person name="Blanchin S."/>
            <person name="Beckerich J.-M."/>
            <person name="Beyne E."/>
            <person name="Bleykasten C."/>
            <person name="Boisrame A."/>
            <person name="Boyer J."/>
            <person name="Cattolico L."/>
            <person name="Confanioleri F."/>
            <person name="de Daruvar A."/>
            <person name="Despons L."/>
            <person name="Fabre E."/>
            <person name="Fairhead C."/>
            <person name="Ferry-Dumazet H."/>
            <person name="Groppi A."/>
            <person name="Hantraye F."/>
            <person name="Hennequin C."/>
            <person name="Jauniaux N."/>
            <person name="Joyet P."/>
            <person name="Kachouri R."/>
            <person name="Kerrest A."/>
            <person name="Koszul R."/>
            <person name="Lemaire M."/>
            <person name="Lesur I."/>
            <person name="Ma L."/>
            <person name="Muller H."/>
            <person name="Nicaud J.-M."/>
            <person name="Nikolski M."/>
            <person name="Oztas S."/>
            <person name="Ozier-Kalogeropoulos O."/>
            <person name="Pellenz S."/>
            <person name="Potier S."/>
            <person name="Richard G.-F."/>
            <person name="Straub M.-L."/>
            <person name="Suleau A."/>
            <person name="Swennen D."/>
            <person name="Tekaia F."/>
            <person name="Wesolowski-Louvel M."/>
            <person name="Westhof E."/>
            <person name="Wirth B."/>
            <person name="Zeniou-Meyer M."/>
            <person name="Zivanovic Y."/>
            <person name="Bolotin-Fukuhara M."/>
            <person name="Thierry A."/>
            <person name="Bouchier C."/>
            <person name="Caudron B."/>
            <person name="Scarpelli C."/>
            <person name="Gaillardin C."/>
            <person name="Weissenbach J."/>
            <person name="Wincker P."/>
            <person name="Souciet J.-L."/>
        </authorList>
    </citation>
    <scope>NUCLEOTIDE SEQUENCE [LARGE SCALE GENOMIC DNA]</scope>
    <source>
        <strain>ATCC 36239 / CBS 767 / BCRC 21394 / JCM 1990 / NBRC 0083 / IGC 2968</strain>
    </source>
</reference>
<sequence>MSRVGVLALGPAGVGKSTFCNSIITHMQSIGRRAHIVNLDPAAEPSEYEFTIDIRDLISLQDVMEEMDLGPNGALIYCFEFLMNNLDWLDEEIGDFNDEYLIFDCPGQIELYTHIPVLPTIVRHLQTSLNFNLCATYLLEAPFVIDRSKFFSGALSAMSAMILLELPHINILSKIDLIKNEVSKKELKKFLNPDPLLLNASSDNESNPKFAKLNKAIANLVDDFGMVQFLPLDCNKDSDSVATILSYIDDVTQWSESQEPKEPVEEIEEEVDFE</sequence>
<organism>
    <name type="scientific">Debaryomyces hansenii (strain ATCC 36239 / CBS 767 / BCRC 21394 / JCM 1990 / NBRC 0083 / IGC 2968)</name>
    <name type="common">Yeast</name>
    <name type="synonym">Torulaspora hansenii</name>
    <dbReference type="NCBI Taxonomy" id="284592"/>
    <lineage>
        <taxon>Eukaryota</taxon>
        <taxon>Fungi</taxon>
        <taxon>Dikarya</taxon>
        <taxon>Ascomycota</taxon>
        <taxon>Saccharomycotina</taxon>
        <taxon>Pichiomycetes</taxon>
        <taxon>Debaryomycetaceae</taxon>
        <taxon>Debaryomyces</taxon>
    </lineage>
</organism>
<dbReference type="EMBL" id="CR382139">
    <property type="protein sequence ID" value="CAG90598.2"/>
    <property type="molecule type" value="Genomic_DNA"/>
</dbReference>
<dbReference type="RefSeq" id="XP_462112.2">
    <property type="nucleotide sequence ID" value="XM_462112.1"/>
</dbReference>
<dbReference type="SMR" id="Q6BI59"/>
<dbReference type="FunCoup" id="Q6BI59">
    <property type="interactions" value="933"/>
</dbReference>
<dbReference type="STRING" id="284592.Q6BI59"/>
<dbReference type="GeneID" id="2905026"/>
<dbReference type="KEGG" id="dha:DEHA2G13222g"/>
<dbReference type="VEuPathDB" id="FungiDB:DEHA2G13222g"/>
<dbReference type="eggNOG" id="KOG1534">
    <property type="taxonomic scope" value="Eukaryota"/>
</dbReference>
<dbReference type="HOGENOM" id="CLU_037460_0_0_1"/>
<dbReference type="InParanoid" id="Q6BI59"/>
<dbReference type="OMA" id="LYTHMTV"/>
<dbReference type="OrthoDB" id="5839at2759"/>
<dbReference type="Proteomes" id="UP000000599">
    <property type="component" value="Chromosome G"/>
</dbReference>
<dbReference type="GO" id="GO:0005525">
    <property type="term" value="F:GTP binding"/>
    <property type="evidence" value="ECO:0007669"/>
    <property type="project" value="UniProtKB-KW"/>
</dbReference>
<dbReference type="GO" id="GO:0003924">
    <property type="term" value="F:GTPase activity"/>
    <property type="evidence" value="ECO:0007669"/>
    <property type="project" value="TreeGrafter"/>
</dbReference>
<dbReference type="GO" id="GO:0007064">
    <property type="term" value="P:mitotic sister chromatid cohesion"/>
    <property type="evidence" value="ECO:0007669"/>
    <property type="project" value="EnsemblFungi"/>
</dbReference>
<dbReference type="GO" id="GO:0006606">
    <property type="term" value="P:protein import into nucleus"/>
    <property type="evidence" value="ECO:0007669"/>
    <property type="project" value="EnsemblFungi"/>
</dbReference>
<dbReference type="CDD" id="cd17872">
    <property type="entry name" value="GPN3"/>
    <property type="match status" value="1"/>
</dbReference>
<dbReference type="FunFam" id="3.40.50.300:FF:000552">
    <property type="entry name" value="GPN-loop GTPase 3"/>
    <property type="match status" value="1"/>
</dbReference>
<dbReference type="Gene3D" id="3.40.50.300">
    <property type="entry name" value="P-loop containing nucleotide triphosphate hydrolases"/>
    <property type="match status" value="1"/>
</dbReference>
<dbReference type="InterPro" id="IPR004130">
    <property type="entry name" value="Gpn"/>
</dbReference>
<dbReference type="InterPro" id="IPR030228">
    <property type="entry name" value="Gpn3"/>
</dbReference>
<dbReference type="InterPro" id="IPR027417">
    <property type="entry name" value="P-loop_NTPase"/>
</dbReference>
<dbReference type="PANTHER" id="PTHR21231:SF7">
    <property type="entry name" value="GPN-LOOP GTPASE 3"/>
    <property type="match status" value="1"/>
</dbReference>
<dbReference type="PANTHER" id="PTHR21231">
    <property type="entry name" value="XPA-BINDING PROTEIN 1-RELATED"/>
    <property type="match status" value="1"/>
</dbReference>
<dbReference type="Pfam" id="PF03029">
    <property type="entry name" value="ATP_bind_1"/>
    <property type="match status" value="1"/>
</dbReference>
<dbReference type="SUPFAM" id="SSF52540">
    <property type="entry name" value="P-loop containing nucleoside triphosphate hydrolases"/>
    <property type="match status" value="1"/>
</dbReference>
<feature type="chain" id="PRO_0000255591" description="GPN-loop GTPase 3">
    <location>
        <begin position="1"/>
        <end position="274"/>
    </location>
</feature>
<feature type="region of interest" description="Disordered" evidence="3">
    <location>
        <begin position="255"/>
        <end position="274"/>
    </location>
</feature>
<feature type="short sequence motif" description="Gly-Pro-Asn (GPN)-loop; involved in dimer interface" evidence="2">
    <location>
        <begin position="70"/>
        <end position="72"/>
    </location>
</feature>
<feature type="compositionally biased region" description="Acidic residues" evidence="3">
    <location>
        <begin position="265"/>
        <end position="274"/>
    </location>
</feature>
<feature type="binding site" evidence="2">
    <location>
        <begin position="13"/>
        <end position="18"/>
    </location>
    <ligand>
        <name>GTP</name>
        <dbReference type="ChEBI" id="CHEBI:37565"/>
    </ligand>
</feature>
<feature type="binding site" evidence="2">
    <location>
        <begin position="173"/>
        <end position="176"/>
    </location>
    <ligand>
        <name>GTP</name>
        <dbReference type="ChEBI" id="CHEBI:37565"/>
    </ligand>
</feature>
<feature type="site" description="Stabilizes the phosphate intermediate; shared with dimeric partner" evidence="2">
    <location>
        <position position="72"/>
    </location>
</feature>
<evidence type="ECO:0000250" key="1">
    <source>
        <dbReference type="UniProtKB" id="Q06543"/>
    </source>
</evidence>
<evidence type="ECO:0000250" key="2">
    <source>
        <dbReference type="UniProtKB" id="Q9UYR9"/>
    </source>
</evidence>
<evidence type="ECO:0000256" key="3">
    <source>
        <dbReference type="SAM" id="MobiDB-lite"/>
    </source>
</evidence>
<evidence type="ECO:0000305" key="4"/>
<protein>
    <recommendedName>
        <fullName evidence="1">GPN-loop GTPase 3</fullName>
    </recommendedName>
</protein>
<keyword id="KW-0342">GTP-binding</keyword>
<keyword id="KW-0378">Hydrolase</keyword>
<keyword id="KW-0547">Nucleotide-binding</keyword>
<keyword id="KW-1185">Reference proteome</keyword>